<protein>
    <recommendedName>
        <fullName evidence="1">DNA-directed RNA polymerase subunit alpha</fullName>
        <shortName evidence="1">RNAP subunit alpha</shortName>
        <ecNumber evidence="1">2.7.7.6</ecNumber>
    </recommendedName>
    <alternativeName>
        <fullName evidence="1">RNA polymerase subunit alpha</fullName>
    </alternativeName>
    <alternativeName>
        <fullName evidence="1">Transcriptase subunit alpha</fullName>
    </alternativeName>
</protein>
<evidence type="ECO:0000255" key="1">
    <source>
        <dbReference type="HAMAP-Rule" id="MF_00059"/>
    </source>
</evidence>
<keyword id="KW-0240">DNA-directed RNA polymerase</keyword>
<keyword id="KW-0548">Nucleotidyltransferase</keyword>
<keyword id="KW-1185">Reference proteome</keyword>
<keyword id="KW-0804">Transcription</keyword>
<keyword id="KW-0808">Transferase</keyword>
<proteinExistence type="inferred from homology"/>
<reference key="1">
    <citation type="journal article" date="2003" name="Proc. Natl. Acad. Sci. U.S.A.">
        <title>Genome sequence of the cyanobacterium Prochlorococcus marinus SS120, a nearly minimal oxyphototrophic genome.</title>
        <authorList>
            <person name="Dufresne A."/>
            <person name="Salanoubat M."/>
            <person name="Partensky F."/>
            <person name="Artiguenave F."/>
            <person name="Axmann I.M."/>
            <person name="Barbe V."/>
            <person name="Duprat S."/>
            <person name="Galperin M.Y."/>
            <person name="Koonin E.V."/>
            <person name="Le Gall F."/>
            <person name="Makarova K.S."/>
            <person name="Ostrowski M."/>
            <person name="Oztas S."/>
            <person name="Robert C."/>
            <person name="Rogozin I.B."/>
            <person name="Scanlan D.J."/>
            <person name="Tandeau de Marsac N."/>
            <person name="Weissenbach J."/>
            <person name="Wincker P."/>
            <person name="Wolf Y.I."/>
            <person name="Hess W.R."/>
        </authorList>
    </citation>
    <scope>NUCLEOTIDE SEQUENCE [LARGE SCALE GENOMIC DNA]</scope>
    <source>
        <strain>SARG / CCMP1375 / SS120</strain>
    </source>
</reference>
<name>RPOA_PROMA</name>
<dbReference type="EC" id="2.7.7.6" evidence="1"/>
<dbReference type="EMBL" id="AE017126">
    <property type="protein sequence ID" value="AAQ00733.1"/>
    <property type="molecule type" value="Genomic_DNA"/>
</dbReference>
<dbReference type="RefSeq" id="NP_876080.1">
    <property type="nucleotide sequence ID" value="NC_005042.1"/>
</dbReference>
<dbReference type="RefSeq" id="WP_011125838.1">
    <property type="nucleotide sequence ID" value="NC_005042.1"/>
</dbReference>
<dbReference type="SMR" id="Q7V9Y5"/>
<dbReference type="STRING" id="167539.Pro_1689"/>
<dbReference type="EnsemblBacteria" id="AAQ00733">
    <property type="protein sequence ID" value="AAQ00733"/>
    <property type="gene ID" value="Pro_1689"/>
</dbReference>
<dbReference type="KEGG" id="pma:Pro_1689"/>
<dbReference type="PATRIC" id="fig|167539.5.peg.1783"/>
<dbReference type="eggNOG" id="COG0202">
    <property type="taxonomic scope" value="Bacteria"/>
</dbReference>
<dbReference type="HOGENOM" id="CLU_053084_0_1_3"/>
<dbReference type="OrthoDB" id="9805706at2"/>
<dbReference type="Proteomes" id="UP000001420">
    <property type="component" value="Chromosome"/>
</dbReference>
<dbReference type="GO" id="GO:0005737">
    <property type="term" value="C:cytoplasm"/>
    <property type="evidence" value="ECO:0007669"/>
    <property type="project" value="UniProtKB-ARBA"/>
</dbReference>
<dbReference type="GO" id="GO:0000428">
    <property type="term" value="C:DNA-directed RNA polymerase complex"/>
    <property type="evidence" value="ECO:0007669"/>
    <property type="project" value="UniProtKB-KW"/>
</dbReference>
<dbReference type="GO" id="GO:0003677">
    <property type="term" value="F:DNA binding"/>
    <property type="evidence" value="ECO:0007669"/>
    <property type="project" value="UniProtKB-UniRule"/>
</dbReference>
<dbReference type="GO" id="GO:0003899">
    <property type="term" value="F:DNA-directed RNA polymerase activity"/>
    <property type="evidence" value="ECO:0007669"/>
    <property type="project" value="UniProtKB-UniRule"/>
</dbReference>
<dbReference type="GO" id="GO:0046983">
    <property type="term" value="F:protein dimerization activity"/>
    <property type="evidence" value="ECO:0007669"/>
    <property type="project" value="InterPro"/>
</dbReference>
<dbReference type="GO" id="GO:0006351">
    <property type="term" value="P:DNA-templated transcription"/>
    <property type="evidence" value="ECO:0007669"/>
    <property type="project" value="UniProtKB-UniRule"/>
</dbReference>
<dbReference type="CDD" id="cd06928">
    <property type="entry name" value="RNAP_alpha_NTD"/>
    <property type="match status" value="1"/>
</dbReference>
<dbReference type="FunFam" id="2.170.120.12:FF:000001">
    <property type="entry name" value="DNA-directed RNA polymerase subunit alpha"/>
    <property type="match status" value="1"/>
</dbReference>
<dbReference type="Gene3D" id="1.10.150.20">
    <property type="entry name" value="5' to 3' exonuclease, C-terminal subdomain"/>
    <property type="match status" value="1"/>
</dbReference>
<dbReference type="Gene3D" id="2.170.120.12">
    <property type="entry name" value="DNA-directed RNA polymerase, insert domain"/>
    <property type="match status" value="1"/>
</dbReference>
<dbReference type="Gene3D" id="3.30.1360.10">
    <property type="entry name" value="RNA polymerase, RBP11-like subunit"/>
    <property type="match status" value="1"/>
</dbReference>
<dbReference type="HAMAP" id="MF_00059">
    <property type="entry name" value="RNApol_bact_RpoA"/>
    <property type="match status" value="1"/>
</dbReference>
<dbReference type="InterPro" id="IPR011262">
    <property type="entry name" value="DNA-dir_RNA_pol_insert"/>
</dbReference>
<dbReference type="InterPro" id="IPR011263">
    <property type="entry name" value="DNA-dir_RNA_pol_RpoA/D/Rpb3"/>
</dbReference>
<dbReference type="InterPro" id="IPR011773">
    <property type="entry name" value="DNA-dir_RpoA"/>
</dbReference>
<dbReference type="InterPro" id="IPR036603">
    <property type="entry name" value="RBP11-like"/>
</dbReference>
<dbReference type="InterPro" id="IPR011260">
    <property type="entry name" value="RNAP_asu_C"/>
</dbReference>
<dbReference type="InterPro" id="IPR036643">
    <property type="entry name" value="RNApol_insert_sf"/>
</dbReference>
<dbReference type="NCBIfam" id="NF003516">
    <property type="entry name" value="PRK05182.2-2"/>
    <property type="match status" value="1"/>
</dbReference>
<dbReference type="NCBIfam" id="NF003519">
    <property type="entry name" value="PRK05182.2-5"/>
    <property type="match status" value="1"/>
</dbReference>
<dbReference type="NCBIfam" id="TIGR02027">
    <property type="entry name" value="rpoA"/>
    <property type="match status" value="1"/>
</dbReference>
<dbReference type="Pfam" id="PF01000">
    <property type="entry name" value="RNA_pol_A_bac"/>
    <property type="match status" value="1"/>
</dbReference>
<dbReference type="Pfam" id="PF03118">
    <property type="entry name" value="RNA_pol_A_CTD"/>
    <property type="match status" value="1"/>
</dbReference>
<dbReference type="Pfam" id="PF01193">
    <property type="entry name" value="RNA_pol_L"/>
    <property type="match status" value="1"/>
</dbReference>
<dbReference type="SMART" id="SM00662">
    <property type="entry name" value="RPOLD"/>
    <property type="match status" value="1"/>
</dbReference>
<dbReference type="SUPFAM" id="SSF47789">
    <property type="entry name" value="C-terminal domain of RNA polymerase alpha subunit"/>
    <property type="match status" value="1"/>
</dbReference>
<dbReference type="SUPFAM" id="SSF56553">
    <property type="entry name" value="Insert subdomain of RNA polymerase alpha subunit"/>
    <property type="match status" value="1"/>
</dbReference>
<dbReference type="SUPFAM" id="SSF55257">
    <property type="entry name" value="RBP11-like subunits of RNA polymerase"/>
    <property type="match status" value="1"/>
</dbReference>
<gene>
    <name evidence="1" type="primary">rpoA</name>
    <name type="ordered locus">Pro_1689</name>
</gene>
<feature type="chain" id="PRO_0000175356" description="DNA-directed RNA polymerase subunit alpha">
    <location>
        <begin position="1"/>
        <end position="312"/>
    </location>
</feature>
<feature type="region of interest" description="Alpha N-terminal domain (alpha-NTD)" evidence="1">
    <location>
        <begin position="1"/>
        <end position="229"/>
    </location>
</feature>
<feature type="region of interest" description="Alpha C-terminal domain (alpha-CTD)" evidence="1">
    <location>
        <begin position="246"/>
        <end position="312"/>
    </location>
</feature>
<comment type="function">
    <text evidence="1">DNA-dependent RNA polymerase catalyzes the transcription of DNA into RNA using the four ribonucleoside triphosphates as substrates.</text>
</comment>
<comment type="catalytic activity">
    <reaction evidence="1">
        <text>RNA(n) + a ribonucleoside 5'-triphosphate = RNA(n+1) + diphosphate</text>
        <dbReference type="Rhea" id="RHEA:21248"/>
        <dbReference type="Rhea" id="RHEA-COMP:14527"/>
        <dbReference type="Rhea" id="RHEA-COMP:17342"/>
        <dbReference type="ChEBI" id="CHEBI:33019"/>
        <dbReference type="ChEBI" id="CHEBI:61557"/>
        <dbReference type="ChEBI" id="CHEBI:140395"/>
        <dbReference type="EC" id="2.7.7.6"/>
    </reaction>
</comment>
<comment type="subunit">
    <text evidence="1">In cyanobacteria the RNAP catalytic core is composed of 2 alpha, 1 beta, 1 beta', 1 gamma and 1 omega subunit. When a sigma factor is associated with the core the holoenzyme is formed, which can initiate transcription.</text>
</comment>
<comment type="domain">
    <text evidence="1">The N-terminal domain is essential for RNAP assembly and basal transcription, whereas the C-terminal domain is involved in interaction with transcriptional regulators and with upstream promoter elements.</text>
</comment>
<comment type="similarity">
    <text evidence="1">Belongs to the RNA polymerase alpha chain family.</text>
</comment>
<organism>
    <name type="scientific">Prochlorococcus marinus (strain SARG / CCMP1375 / SS120)</name>
    <dbReference type="NCBI Taxonomy" id="167539"/>
    <lineage>
        <taxon>Bacteria</taxon>
        <taxon>Bacillati</taxon>
        <taxon>Cyanobacteriota</taxon>
        <taxon>Cyanophyceae</taxon>
        <taxon>Synechococcales</taxon>
        <taxon>Prochlorococcaceae</taxon>
        <taxon>Prochlorococcus</taxon>
    </lineage>
</organism>
<accession>Q7V9Y5</accession>
<sequence>MLQYQIDRIEHQVSDDRSQTGIFLIGPLERGQATTLGNSLRRVLMGGLEGSAVTAVRISGVNHEYATVPGVREDVLDILLNCKELTVNSRSQELEIGRLVVTGPAEVKARDLQFSSQVQIVDVDRPIATVHSGHSLELELHVERGVGYRPVDRRNEATTAIDLLQIDAVFMPVKKVNFTIDETAVSEGGSTRERLRMEIVTDGSITPDDAVAEAANQLIELFQPLATVTMVEEVPQEPEPTAEAQIPLEELNLSVRAYNCLKRAQVNSVSDLMGFSYEDLLEIKNFGSKSADEVIEALERIGISIPQSRTSA</sequence>